<proteinExistence type="evidence at transcript level"/>
<feature type="chain" id="PRO_0000446087" description="Transcription factor COE1-A">
    <location>
        <begin position="1"/>
        <end position="591"/>
    </location>
</feature>
<feature type="domain" description="IPT/TIG" evidence="3">
    <location>
        <begin position="262"/>
        <end position="344"/>
    </location>
</feature>
<feature type="zinc finger region" description="C5-type" evidence="1">
    <location>
        <begin position="151"/>
        <end position="170"/>
    </location>
</feature>
<feature type="region of interest" description="Interaction with DNA" evidence="1">
    <location>
        <begin position="63"/>
        <end position="66"/>
    </location>
</feature>
<feature type="region of interest" description="Interaction with DNA" evidence="1">
    <location>
        <begin position="197"/>
        <end position="204"/>
    </location>
</feature>
<feature type="region of interest" description="Interaction with DNA" evidence="1">
    <location>
        <begin position="236"/>
        <end position="239"/>
    </location>
</feature>
<feature type="region of interest" description="Disordered" evidence="5">
    <location>
        <begin position="454"/>
        <end position="484"/>
    </location>
</feature>
<feature type="compositionally biased region" description="Polar residues" evidence="5">
    <location>
        <begin position="454"/>
        <end position="466"/>
    </location>
</feature>
<feature type="compositionally biased region" description="Low complexity" evidence="5">
    <location>
        <begin position="471"/>
        <end position="484"/>
    </location>
</feature>
<feature type="site" description="Interaction with DNA" evidence="1">
    <location>
        <position position="163"/>
    </location>
</feature>
<feature type="site" description="Interaction with DNA" evidence="1">
    <location>
        <position position="172"/>
    </location>
</feature>
<feature type="splice variant" id="VSP_060020" description="In isoform 2.">
    <original>A</original>
    <variation>GES</variation>
    <location>
        <position position="260"/>
    </location>
</feature>
<feature type="splice variant" id="VSP_060021" description="In isoform 3.">
    <original>VIPGMIVPPM</original>
    <variation>GESGHRIYSLTLPPSPKKGKQKCENLTESR</variation>
    <location>
        <begin position="582"/>
        <end position="591"/>
    </location>
</feature>
<reference evidence="9" key="1">
    <citation type="journal article" date="2013" name="Nature">
        <title>The zebrafish reference genome sequence and its relationship to the human genome.</title>
        <authorList>
            <person name="Howe K."/>
            <person name="Clark M.D."/>
            <person name="Torroja C.F."/>
            <person name="Torrance J."/>
            <person name="Berthelot C."/>
            <person name="Muffato M."/>
            <person name="Collins J.E."/>
            <person name="Humphray S."/>
            <person name="McLaren K."/>
            <person name="Matthews L."/>
            <person name="McLaren S."/>
            <person name="Sealy I."/>
            <person name="Caccamo M."/>
            <person name="Churcher C."/>
            <person name="Scott C."/>
            <person name="Barrett J.C."/>
            <person name="Koch R."/>
            <person name="Rauch G.J."/>
            <person name="White S."/>
            <person name="Chow W."/>
            <person name="Kilian B."/>
            <person name="Quintais L.T."/>
            <person name="Guerra-Assuncao J.A."/>
            <person name="Zhou Y."/>
            <person name="Gu Y."/>
            <person name="Yen J."/>
            <person name="Vogel J.H."/>
            <person name="Eyre T."/>
            <person name="Redmond S."/>
            <person name="Banerjee R."/>
            <person name="Chi J."/>
            <person name="Fu B."/>
            <person name="Langley E."/>
            <person name="Maguire S.F."/>
            <person name="Laird G.K."/>
            <person name="Lloyd D."/>
            <person name="Kenyon E."/>
            <person name="Donaldson S."/>
            <person name="Sehra H."/>
            <person name="Almeida-King J."/>
            <person name="Loveland J."/>
            <person name="Trevanion S."/>
            <person name="Jones M."/>
            <person name="Quail M."/>
            <person name="Willey D."/>
            <person name="Hunt A."/>
            <person name="Burton J."/>
            <person name="Sims S."/>
            <person name="McLay K."/>
            <person name="Plumb B."/>
            <person name="Davis J."/>
            <person name="Clee C."/>
            <person name="Oliver K."/>
            <person name="Clark R."/>
            <person name="Riddle C."/>
            <person name="Elliot D."/>
            <person name="Threadgold G."/>
            <person name="Harden G."/>
            <person name="Ware D."/>
            <person name="Begum S."/>
            <person name="Mortimore B."/>
            <person name="Kerry G."/>
            <person name="Heath P."/>
            <person name="Phillimore B."/>
            <person name="Tracey A."/>
            <person name="Corby N."/>
            <person name="Dunn M."/>
            <person name="Johnson C."/>
            <person name="Wood J."/>
            <person name="Clark S."/>
            <person name="Pelan S."/>
            <person name="Griffiths G."/>
            <person name="Smith M."/>
            <person name="Glithero R."/>
            <person name="Howden P."/>
            <person name="Barker N."/>
            <person name="Lloyd C."/>
            <person name="Stevens C."/>
            <person name="Harley J."/>
            <person name="Holt K."/>
            <person name="Panagiotidis G."/>
            <person name="Lovell J."/>
            <person name="Beasley H."/>
            <person name="Henderson C."/>
            <person name="Gordon D."/>
            <person name="Auger K."/>
            <person name="Wright D."/>
            <person name="Collins J."/>
            <person name="Raisen C."/>
            <person name="Dyer L."/>
            <person name="Leung K."/>
            <person name="Robertson L."/>
            <person name="Ambridge K."/>
            <person name="Leongamornlert D."/>
            <person name="McGuire S."/>
            <person name="Gilderthorp R."/>
            <person name="Griffiths C."/>
            <person name="Manthravadi D."/>
            <person name="Nichol S."/>
            <person name="Barker G."/>
            <person name="Whitehead S."/>
            <person name="Kay M."/>
            <person name="Brown J."/>
            <person name="Murnane C."/>
            <person name="Gray E."/>
            <person name="Humphries M."/>
            <person name="Sycamore N."/>
            <person name="Barker D."/>
            <person name="Saunders D."/>
            <person name="Wallis J."/>
            <person name="Babbage A."/>
            <person name="Hammond S."/>
            <person name="Mashreghi-Mohammadi M."/>
            <person name="Barr L."/>
            <person name="Martin S."/>
            <person name="Wray P."/>
            <person name="Ellington A."/>
            <person name="Matthews N."/>
            <person name="Ellwood M."/>
            <person name="Woodmansey R."/>
            <person name="Clark G."/>
            <person name="Cooper J."/>
            <person name="Tromans A."/>
            <person name="Grafham D."/>
            <person name="Skuce C."/>
            <person name="Pandian R."/>
            <person name="Andrews R."/>
            <person name="Harrison E."/>
            <person name="Kimberley A."/>
            <person name="Garnett J."/>
            <person name="Fosker N."/>
            <person name="Hall R."/>
            <person name="Garner P."/>
            <person name="Kelly D."/>
            <person name="Bird C."/>
            <person name="Palmer S."/>
            <person name="Gehring I."/>
            <person name="Berger A."/>
            <person name="Dooley C.M."/>
            <person name="Ersan-Urun Z."/>
            <person name="Eser C."/>
            <person name="Geiger H."/>
            <person name="Geisler M."/>
            <person name="Karotki L."/>
            <person name="Kirn A."/>
            <person name="Konantz J."/>
            <person name="Konantz M."/>
            <person name="Oberlander M."/>
            <person name="Rudolph-Geiger S."/>
            <person name="Teucke M."/>
            <person name="Lanz C."/>
            <person name="Raddatz G."/>
            <person name="Osoegawa K."/>
            <person name="Zhu B."/>
            <person name="Rapp A."/>
            <person name="Widaa S."/>
            <person name="Langford C."/>
            <person name="Yang F."/>
            <person name="Schuster S.C."/>
            <person name="Carter N.P."/>
            <person name="Harrow J."/>
            <person name="Ning Z."/>
            <person name="Herrero J."/>
            <person name="Searle S.M."/>
            <person name="Enright A."/>
            <person name="Geisler R."/>
            <person name="Plasterk R.H."/>
            <person name="Lee C."/>
            <person name="Westerfield M."/>
            <person name="de Jong P.J."/>
            <person name="Zon L.I."/>
            <person name="Postlethwait J.H."/>
            <person name="Nusslein-Volhard C."/>
            <person name="Hubbard T.J."/>
            <person name="Roest Crollius H."/>
            <person name="Rogers J."/>
            <person name="Stemple D.L."/>
        </authorList>
    </citation>
    <scope>NUCLEOTIDE SEQUENCE [LARGE SCALE GENOMIC DNA]</scope>
    <source>
        <strain>Tuebingen</strain>
    </source>
</reference>
<reference evidence="8" key="2">
    <citation type="journal article" date="2018" name="Open Biol.">
        <title>Loss of runx1 function results in B cell immunodeficiency but not T cell in adult zebrafish.</title>
        <authorList>
            <person name="Chi Y."/>
            <person name="Huang Z."/>
            <person name="Chen Q."/>
            <person name="Xiong X."/>
            <person name="Chen K."/>
            <person name="Xu J."/>
            <person name="Zhang Y."/>
            <person name="Zhang W."/>
        </authorList>
    </citation>
    <scope>TISSUE SPECIFICITY</scope>
    <scope>INDUCTION</scope>
</reference>
<organism evidence="9">
    <name type="scientific">Danio rerio</name>
    <name type="common">Zebrafish</name>
    <name type="synonym">Brachydanio rerio</name>
    <dbReference type="NCBI Taxonomy" id="7955"/>
    <lineage>
        <taxon>Eukaryota</taxon>
        <taxon>Metazoa</taxon>
        <taxon>Chordata</taxon>
        <taxon>Craniata</taxon>
        <taxon>Vertebrata</taxon>
        <taxon>Euteleostomi</taxon>
        <taxon>Actinopterygii</taxon>
        <taxon>Neopterygii</taxon>
        <taxon>Teleostei</taxon>
        <taxon>Ostariophysi</taxon>
        <taxon>Cypriniformes</taxon>
        <taxon>Danionidae</taxon>
        <taxon>Danioninae</taxon>
        <taxon>Danio</taxon>
    </lineage>
</organism>
<keyword id="KW-0010">Activator</keyword>
<keyword id="KW-0025">Alternative splicing</keyword>
<keyword id="KW-0238">DNA-binding</keyword>
<keyword id="KW-0479">Metal-binding</keyword>
<keyword id="KW-0539">Nucleus</keyword>
<keyword id="KW-1185">Reference proteome</keyword>
<keyword id="KW-0804">Transcription</keyword>
<keyword id="KW-0805">Transcription regulation</keyword>
<keyword id="KW-0862">Zinc</keyword>
<keyword id="KW-0863">Zinc-finger</keyword>
<dbReference type="EMBL" id="AL929292">
    <property type="status" value="NOT_ANNOTATED_CDS"/>
    <property type="molecule type" value="Genomic_DNA"/>
</dbReference>
<dbReference type="EMBL" id="CU012046">
    <property type="status" value="NOT_ANNOTATED_CDS"/>
    <property type="molecule type" value="Genomic_DNA"/>
</dbReference>
<dbReference type="EMBL" id="CU019638">
    <property type="status" value="NOT_ANNOTATED_CDS"/>
    <property type="molecule type" value="Genomic_DNA"/>
</dbReference>
<dbReference type="EMBL" id="CU468683">
    <property type="status" value="NOT_ANNOTATED_CDS"/>
    <property type="molecule type" value="Genomic_DNA"/>
</dbReference>
<dbReference type="RefSeq" id="NP_001410899.1">
    <molecule id="A0A0R4IWI1-2"/>
    <property type="nucleotide sequence ID" value="NM_001423970.1"/>
</dbReference>
<dbReference type="RefSeq" id="NP_001410900.1">
    <molecule id="A0A0R4IWI1-1"/>
    <property type="nucleotide sequence ID" value="NM_001423971.1"/>
</dbReference>
<dbReference type="RefSeq" id="XP_009289485.1">
    <property type="nucleotide sequence ID" value="XM_009291210.2"/>
</dbReference>
<dbReference type="SMR" id="A0A0R4IWI1"/>
<dbReference type="FunCoup" id="A0A0R4IWI1">
    <property type="interactions" value="394"/>
</dbReference>
<dbReference type="STRING" id="7955.ENSDARP00000139406"/>
<dbReference type="PaxDb" id="7955-ENSDARP00000028095"/>
<dbReference type="Ensembl" id="ENSDART00000172171">
    <molecule id="A0A0R4IWI1-1"/>
    <property type="protein sequence ID" value="ENSDARP00000139648"/>
    <property type="gene ID" value="ENSDARG00000099849"/>
</dbReference>
<dbReference type="GeneID" id="565310"/>
<dbReference type="AGR" id="ZFIN:ZDB-GENE-070112-292"/>
<dbReference type="AGR" id="ZFIN:ZDB-GENE-081028-51"/>
<dbReference type="ZFIN" id="ZDB-GENE-081028-51">
    <property type="gene designation" value="ebf1a"/>
</dbReference>
<dbReference type="ZFIN" id="ZDB-GENE-070112-292">
    <property type="gene designation" value="ebf3a"/>
</dbReference>
<dbReference type="eggNOG" id="KOG3836">
    <property type="taxonomic scope" value="Eukaryota"/>
</dbReference>
<dbReference type="InParanoid" id="A0A0R4IWI1"/>
<dbReference type="OMA" id="PACNENE"/>
<dbReference type="OrthoDB" id="25246at2759"/>
<dbReference type="PhylomeDB" id="A0A0R4IWI1"/>
<dbReference type="PRO" id="PR:A0A0R4IWI1"/>
<dbReference type="Proteomes" id="UP000000437">
    <property type="component" value="Chromosome 14"/>
</dbReference>
<dbReference type="Bgee" id="ENSDARG00000099849">
    <property type="expression patterns" value="Expressed in retina and 20 other cell types or tissues"/>
</dbReference>
<dbReference type="ExpressionAtlas" id="A0A0R4IWI1">
    <property type="expression patterns" value="baseline"/>
</dbReference>
<dbReference type="GO" id="GO:0005634">
    <property type="term" value="C:nucleus"/>
    <property type="evidence" value="ECO:0007669"/>
    <property type="project" value="UniProtKB-SubCell"/>
</dbReference>
<dbReference type="GO" id="GO:0000981">
    <property type="term" value="F:DNA-binding transcription factor activity, RNA polymerase II-specific"/>
    <property type="evidence" value="ECO:0000318"/>
    <property type="project" value="GO_Central"/>
</dbReference>
<dbReference type="GO" id="GO:0000978">
    <property type="term" value="F:RNA polymerase II cis-regulatory region sequence-specific DNA binding"/>
    <property type="evidence" value="ECO:0000318"/>
    <property type="project" value="GO_Central"/>
</dbReference>
<dbReference type="GO" id="GO:0008270">
    <property type="term" value="F:zinc ion binding"/>
    <property type="evidence" value="ECO:0007669"/>
    <property type="project" value="UniProtKB-KW"/>
</dbReference>
<dbReference type="GO" id="GO:0007399">
    <property type="term" value="P:nervous system development"/>
    <property type="evidence" value="ECO:0007669"/>
    <property type="project" value="UniProtKB-ARBA"/>
</dbReference>
<dbReference type="GO" id="GO:0006357">
    <property type="term" value="P:regulation of transcription by RNA polymerase II"/>
    <property type="evidence" value="ECO:0000318"/>
    <property type="project" value="GO_Central"/>
</dbReference>
<dbReference type="CDD" id="cd11606">
    <property type="entry name" value="COE_DBD"/>
    <property type="match status" value="1"/>
</dbReference>
<dbReference type="CDD" id="cd01175">
    <property type="entry name" value="IPT_COE"/>
    <property type="match status" value="1"/>
</dbReference>
<dbReference type="FunFam" id="1.10.287.4280:FF:000001">
    <property type="entry name" value="transcription factor COE1 isoform X2"/>
    <property type="match status" value="1"/>
</dbReference>
<dbReference type="FunFam" id="2.60.40.3180:FF:000001">
    <property type="entry name" value="transcription factor COE1 isoform X2"/>
    <property type="match status" value="1"/>
</dbReference>
<dbReference type="FunFam" id="2.60.40.10:FF:001696">
    <property type="entry name" value="Transcription factor COE3"/>
    <property type="match status" value="1"/>
</dbReference>
<dbReference type="Gene3D" id="1.10.287.4280">
    <property type="match status" value="1"/>
</dbReference>
<dbReference type="Gene3D" id="2.60.40.10">
    <property type="entry name" value="Immunoglobulins"/>
    <property type="match status" value="1"/>
</dbReference>
<dbReference type="Gene3D" id="2.60.40.3180">
    <property type="entry name" value="Transcription factor COE1, DNA-binding domain"/>
    <property type="match status" value="1"/>
</dbReference>
<dbReference type="InterPro" id="IPR032200">
    <property type="entry name" value="COE_DBD"/>
</dbReference>
<dbReference type="InterPro" id="IPR038173">
    <property type="entry name" value="COE_DBD_sf"/>
</dbReference>
<dbReference type="InterPro" id="IPR032201">
    <property type="entry name" value="COE_HLH"/>
</dbReference>
<dbReference type="InterPro" id="IPR038006">
    <property type="entry name" value="COE_IPT"/>
</dbReference>
<dbReference type="InterPro" id="IPR013783">
    <property type="entry name" value="Ig-like_fold"/>
</dbReference>
<dbReference type="InterPro" id="IPR014756">
    <property type="entry name" value="Ig_E-set"/>
</dbReference>
<dbReference type="InterPro" id="IPR002909">
    <property type="entry name" value="IPT_dom"/>
</dbReference>
<dbReference type="InterPro" id="IPR003523">
    <property type="entry name" value="Transcription_factor_COE"/>
</dbReference>
<dbReference type="InterPro" id="IPR018350">
    <property type="entry name" value="Transcription_factor_COE_CS"/>
</dbReference>
<dbReference type="PANTHER" id="PTHR10747">
    <property type="entry name" value="TRANSCRIPTION FACTOR COE FAMILY MEMBER"/>
    <property type="match status" value="1"/>
</dbReference>
<dbReference type="Pfam" id="PF16422">
    <property type="entry name" value="COE1_DBD"/>
    <property type="match status" value="1"/>
</dbReference>
<dbReference type="Pfam" id="PF16423">
    <property type="entry name" value="COE1_HLH"/>
    <property type="match status" value="1"/>
</dbReference>
<dbReference type="Pfam" id="PF01833">
    <property type="entry name" value="TIG"/>
    <property type="match status" value="1"/>
</dbReference>
<dbReference type="SMART" id="SM00429">
    <property type="entry name" value="IPT"/>
    <property type="match status" value="1"/>
</dbReference>
<dbReference type="SUPFAM" id="SSF81296">
    <property type="entry name" value="E set domains"/>
    <property type="match status" value="1"/>
</dbReference>
<dbReference type="PROSITE" id="PS01345">
    <property type="entry name" value="COE"/>
    <property type="match status" value="1"/>
</dbReference>
<sequence>MFGIQDSIQRSGSSMKEEPIGAGMNAVRTWMQGAGVLDANTAAQSGVGLARAHFEKQPPSNLRKSNFFHFVLALYDRQGQPVEIERTSFVGFVEKEKESTGEKTNNGIHYRLQLLYSNGIRTEQDFYVRLIDSMTKQAIIYEGQDKNPEMCRVLLTHEIMCSRCCDKKSCGNRNETPSDPVIIDRFFLKFFLKCNQNCLKNAGNPRDMRRFQVVVSTTVSVDGHVLAVSDNMFVHNNSKHGRRARRLDPSEGTPSYLEHATPCIKAISPSEGWTTGGATVIIIGDNFFDGLQVIFGTMLVWSELITPHAIRVQTPPRHIPGVVEVTLSYKSKQFCKGTPGRFIYTALNEPTIDYGFQRLQKVIPRHPGDPERLPKEVILKRAADLVEALYGMPHNNQEIILKRAADIAEALYNVPRGHNQLPGLTNSSVHSGMMGVNSFHSQLAVNVSDSTQAANQGFSRNTSSVSPHGYVPSTTPQQSSYSTVSTSMNGYGNAGMTTLGGSPNFLNGSAANSPYAIVPSSPTMASSTSLPSNCSSSSGIFSFSPANMVSAVKQKSAFAPVVRPQASPPPTCTSANGNGLQVIPGMIVPPM</sequence>
<evidence type="ECO:0000250" key="1">
    <source>
        <dbReference type="UniProtKB" id="Q07802"/>
    </source>
</evidence>
<evidence type="ECO:0000250" key="2">
    <source>
        <dbReference type="UniProtKB" id="Q9UH73"/>
    </source>
</evidence>
<evidence type="ECO:0000255" key="3"/>
<evidence type="ECO:0000255" key="4">
    <source>
        <dbReference type="RuleBase" id="RU004489"/>
    </source>
</evidence>
<evidence type="ECO:0000256" key="5">
    <source>
        <dbReference type="SAM" id="MobiDB-lite"/>
    </source>
</evidence>
<evidence type="ECO:0000269" key="6">
    <source>
    </source>
</evidence>
<evidence type="ECO:0000303" key="7">
    <source>
    </source>
</evidence>
<evidence type="ECO:0000305" key="8"/>
<evidence type="ECO:0000312" key="9">
    <source>
        <dbReference type="Proteomes" id="UP000000437"/>
    </source>
</evidence>
<comment type="function">
    <text evidence="1">Transcriptional activator.</text>
</comment>
<comment type="subunit">
    <text evidence="1">Forms either a homodimer or a heterodimer with a related family member.</text>
</comment>
<comment type="subcellular location">
    <subcellularLocation>
        <location evidence="4">Nucleus</location>
    </subcellularLocation>
</comment>
<comment type="alternative products">
    <event type="alternative splicing"/>
    <isoform>
        <id>A0A0R4IWI1-1</id>
        <name>1</name>
        <sequence type="displayed"/>
    </isoform>
    <isoform>
        <id>A0A0R4IWI1-2</id>
        <name>2</name>
        <sequence type="described" ref="VSP_060020"/>
    </isoform>
    <isoform>
        <id>A0A0R4IWI1-3</id>
        <name>3</name>
        <sequence type="described" ref="VSP_060021"/>
    </isoform>
</comment>
<comment type="tissue specificity">
    <text evidence="6">Detected in B cells.</text>
</comment>
<comment type="induction">
    <text evidence="6">Up-regulated in B cells in response to runx1.</text>
</comment>
<comment type="similarity">
    <text evidence="4">Belongs to the COE family.</text>
</comment>
<protein>
    <recommendedName>
        <fullName evidence="2">Transcription factor COE1-A</fullName>
    </recommendedName>
    <alternativeName>
        <fullName evidence="2">Early B cell factor 1-A</fullName>
    </alternativeName>
</protein>
<gene>
    <name evidence="7" type="primary">ebf1a</name>
</gene>
<name>COE1A_DANRE</name>
<accession>A0A0R4IWI1</accession>
<accession>A0A0R4IW26</accession>
<accession>A0A0R4IWS1</accession>